<accession>Q8K9D1</accession>
<reference key="1">
    <citation type="journal article" date="2002" name="Science">
        <title>50 million years of genomic stasis in endosymbiotic bacteria.</title>
        <authorList>
            <person name="Tamas I."/>
            <person name="Klasson L."/>
            <person name="Canbaeck B."/>
            <person name="Naeslund A.K."/>
            <person name="Eriksson A.-S."/>
            <person name="Wernegreen J.J."/>
            <person name="Sandstroem J.P."/>
            <person name="Moran N.A."/>
            <person name="Andersson S.G.E."/>
        </authorList>
    </citation>
    <scope>NUCLEOTIDE SEQUENCE [LARGE SCALE GENOMIC DNA]</scope>
    <source>
        <strain>Sg</strain>
    </source>
</reference>
<keyword id="KW-1015">Disulfide bond</keyword>
<keyword id="KW-0676">Redox-active center</keyword>
<keyword id="KW-0732">Signal</keyword>
<organism>
    <name type="scientific">Buchnera aphidicola subsp. Schizaphis graminum (strain Sg)</name>
    <dbReference type="NCBI Taxonomy" id="198804"/>
    <lineage>
        <taxon>Bacteria</taxon>
        <taxon>Pseudomonadati</taxon>
        <taxon>Pseudomonadota</taxon>
        <taxon>Gammaproteobacteria</taxon>
        <taxon>Enterobacterales</taxon>
        <taxon>Erwiniaceae</taxon>
        <taxon>Buchnera</taxon>
    </lineage>
</organism>
<comment type="function">
    <text evidence="1">Involved in disulfide-bond formation. Acts by transferring its disulfide bond to other proteins (By similarity).</text>
</comment>
<comment type="similarity">
    <text evidence="2">Belongs to the thioredoxin family. DsbA subfamily.</text>
</comment>
<sequence>MKKILIVLYSIFLSFTASSYEFNNKKEYEIEKRNISNVPKVMHFFSFFCPYCYELEKIYNIQSLIKNKIDKKIKIQTYHVNFLGGEFSKILTKIWIIAQKMKVEEKIMMPIFKEIQENNTISHTSNIKNIFLQKTGINKDQYNKFWNSFTIKMLIKKNDNDINKIKLNHVPTMIVNGKYVIDYYKLEKIFKTNFSKKYIKLIKFLLSKK</sequence>
<name>DSBA_BUCAP</name>
<evidence type="ECO:0000250" key="1"/>
<evidence type="ECO:0000305" key="2"/>
<protein>
    <recommendedName>
        <fullName>Thiol:disulfide interchange protein DsbA</fullName>
    </recommendedName>
</protein>
<dbReference type="EMBL" id="AE013218">
    <property type="protein sequence ID" value="AAM67960.1"/>
    <property type="molecule type" value="Genomic_DNA"/>
</dbReference>
<dbReference type="RefSeq" id="WP_011053927.1">
    <property type="nucleotide sequence ID" value="NC_004061.1"/>
</dbReference>
<dbReference type="SMR" id="Q8K9D1"/>
<dbReference type="STRING" id="198804.BUsg_415"/>
<dbReference type="GeneID" id="93003887"/>
<dbReference type="KEGG" id="bas:BUsg_415"/>
<dbReference type="eggNOG" id="COG1651">
    <property type="taxonomic scope" value="Bacteria"/>
</dbReference>
<dbReference type="HOGENOM" id="CLU_088255_3_0_6"/>
<dbReference type="Proteomes" id="UP000000416">
    <property type="component" value="Chromosome"/>
</dbReference>
<dbReference type="GO" id="GO:0016491">
    <property type="term" value="F:oxidoreductase activity"/>
    <property type="evidence" value="ECO:0007669"/>
    <property type="project" value="InterPro"/>
</dbReference>
<dbReference type="CDD" id="cd03019">
    <property type="entry name" value="DsbA_DsbA"/>
    <property type="match status" value="1"/>
</dbReference>
<dbReference type="Gene3D" id="3.40.30.10">
    <property type="entry name" value="Glutaredoxin"/>
    <property type="match status" value="1"/>
</dbReference>
<dbReference type="InterPro" id="IPR001853">
    <property type="entry name" value="DSBA-like_thioredoxin_dom"/>
</dbReference>
<dbReference type="InterPro" id="IPR023205">
    <property type="entry name" value="DsbA/DsbL"/>
</dbReference>
<dbReference type="InterPro" id="IPR050824">
    <property type="entry name" value="Thiol_disulfide_DsbA"/>
</dbReference>
<dbReference type="InterPro" id="IPR036249">
    <property type="entry name" value="Thioredoxin-like_sf"/>
</dbReference>
<dbReference type="InterPro" id="IPR017937">
    <property type="entry name" value="Thioredoxin_CS"/>
</dbReference>
<dbReference type="PANTHER" id="PTHR35891">
    <property type="entry name" value="THIOL:DISULFIDE INTERCHANGE PROTEIN DSBA"/>
    <property type="match status" value="1"/>
</dbReference>
<dbReference type="PANTHER" id="PTHR35891:SF2">
    <property type="entry name" value="THIOL:DISULFIDE INTERCHANGE PROTEIN DSBA"/>
    <property type="match status" value="1"/>
</dbReference>
<dbReference type="Pfam" id="PF01323">
    <property type="entry name" value="DSBA"/>
    <property type="match status" value="1"/>
</dbReference>
<dbReference type="PIRSF" id="PIRSF001488">
    <property type="entry name" value="Tdi_protein"/>
    <property type="match status" value="1"/>
</dbReference>
<dbReference type="SUPFAM" id="SSF52833">
    <property type="entry name" value="Thioredoxin-like"/>
    <property type="match status" value="1"/>
</dbReference>
<dbReference type="PROSITE" id="PS00194">
    <property type="entry name" value="THIOREDOXIN_1"/>
    <property type="match status" value="1"/>
</dbReference>
<proteinExistence type="inferred from homology"/>
<feature type="signal peptide" evidence="1">
    <location>
        <begin position="1"/>
        <end position="19"/>
    </location>
</feature>
<feature type="chain" id="PRO_0000034249" description="Thiol:disulfide interchange protein DsbA">
    <location>
        <begin position="20"/>
        <end position="209"/>
    </location>
</feature>
<feature type="disulfide bond" description="Redox-active" evidence="1">
    <location>
        <begin position="49"/>
        <end position="52"/>
    </location>
</feature>
<gene>
    <name type="primary">dsbA</name>
    <name type="ordered locus">BUsg_415</name>
</gene>